<organism>
    <name type="scientific">Mus musculus</name>
    <name type="common">Mouse</name>
    <dbReference type="NCBI Taxonomy" id="10090"/>
    <lineage>
        <taxon>Eukaryota</taxon>
        <taxon>Metazoa</taxon>
        <taxon>Chordata</taxon>
        <taxon>Craniata</taxon>
        <taxon>Vertebrata</taxon>
        <taxon>Euteleostomi</taxon>
        <taxon>Mammalia</taxon>
        <taxon>Eutheria</taxon>
        <taxon>Euarchontoglires</taxon>
        <taxon>Glires</taxon>
        <taxon>Rodentia</taxon>
        <taxon>Myomorpha</taxon>
        <taxon>Muroidea</taxon>
        <taxon>Muridae</taxon>
        <taxon>Murinae</taxon>
        <taxon>Mus</taxon>
        <taxon>Mus</taxon>
    </lineage>
</organism>
<reference key="1">
    <citation type="journal article" date="2000" name="Nat. Genet.">
        <title>Mutations in a new gene in Ellis-van Creveld syndrome and Weyers acrodental dysostosis.</title>
        <authorList>
            <person name="Ruiz-Perez V.L."/>
            <person name="Ide S.E."/>
            <person name="Strom T.M."/>
            <person name="Lorenz B."/>
            <person name="Wilson D."/>
            <person name="Woods K."/>
            <person name="King L."/>
            <person name="Francomano C."/>
            <person name="Freisinger P."/>
            <person name="Spranger S."/>
            <person name="Marino B."/>
            <person name="Dallapiccola B."/>
            <person name="Wright M."/>
            <person name="Meitinger T."/>
            <person name="Polymeropoulos M.H."/>
            <person name="Goodship J."/>
        </authorList>
    </citation>
    <scope>NUCLEOTIDE SEQUENCE [MRNA]</scope>
    <scope>ALTERNATIVE SPLICING</scope>
    <source>
        <tissue>Brain</tissue>
    </source>
</reference>
<reference key="2">
    <citation type="journal article" date="2000" name="Nat. Genet.">
        <authorList>
            <person name="Ruiz-Perez V.L."/>
            <person name="Ide S.E."/>
            <person name="Strom T.M."/>
            <person name="Lorenz B."/>
            <person name="Wilson D."/>
            <person name="Woods K."/>
            <person name="King L."/>
            <person name="Francomano C."/>
            <person name="Freisinger P."/>
            <person name="Spranger S."/>
            <person name="Marino B."/>
            <person name="Dallapiccola B."/>
            <person name="Wright M."/>
            <person name="Meitinger T."/>
            <person name="Polymeropoulos M.H."/>
            <person name="Goodship J."/>
        </authorList>
    </citation>
    <scope>ERRATUM OF PUBMED:10700184</scope>
</reference>
<reference key="3">
    <citation type="journal article" date="2009" name="PLoS Biol.">
        <title>Lineage-specific biology revealed by a finished genome assembly of the mouse.</title>
        <authorList>
            <person name="Church D.M."/>
            <person name="Goodstadt L."/>
            <person name="Hillier L.W."/>
            <person name="Zody M.C."/>
            <person name="Goldstein S."/>
            <person name="She X."/>
            <person name="Bult C.J."/>
            <person name="Agarwala R."/>
            <person name="Cherry J.L."/>
            <person name="DiCuccio M."/>
            <person name="Hlavina W."/>
            <person name="Kapustin Y."/>
            <person name="Meric P."/>
            <person name="Maglott D."/>
            <person name="Birtle Z."/>
            <person name="Marques A.C."/>
            <person name="Graves T."/>
            <person name="Zhou S."/>
            <person name="Teague B."/>
            <person name="Potamousis K."/>
            <person name="Churas C."/>
            <person name="Place M."/>
            <person name="Herschleb J."/>
            <person name="Runnheim R."/>
            <person name="Forrest D."/>
            <person name="Amos-Landgraf J."/>
            <person name="Schwartz D.C."/>
            <person name="Cheng Z."/>
            <person name="Lindblad-Toh K."/>
            <person name="Eichler E.E."/>
            <person name="Ponting C.P."/>
        </authorList>
    </citation>
    <scope>NUCLEOTIDE SEQUENCE [LARGE SCALE GENOMIC DNA]</scope>
    <source>
        <strain>C57BL/6J</strain>
    </source>
</reference>
<reference key="4">
    <citation type="journal article" date="2007" name="Development">
        <title>Evc is a positive mediator of Ihh-regulated bone growth that localises at the base of chondrocyte cilia.</title>
        <authorList>
            <person name="Ruiz-Perez V.L."/>
            <person name="Blair H.J."/>
            <person name="Rodriguez-Andres M.E."/>
            <person name="Blanco M.J."/>
            <person name="Wilson A."/>
            <person name="Liu Y.N."/>
            <person name="Miles C."/>
            <person name="Peters H."/>
            <person name="Goodship J.A."/>
        </authorList>
    </citation>
    <scope>FUNCTION</scope>
    <scope>TISSUE SPECIFICITY</scope>
    <scope>SUBCELLULAR LOCATION</scope>
</reference>
<reference key="5">
    <citation type="journal article" date="2010" name="Cell">
        <title>A tissue-specific atlas of mouse protein phosphorylation and expression.</title>
        <authorList>
            <person name="Huttlin E.L."/>
            <person name="Jedrychowski M.P."/>
            <person name="Elias J.E."/>
            <person name="Goswami T."/>
            <person name="Rad R."/>
            <person name="Beausoleil S.A."/>
            <person name="Villen J."/>
            <person name="Haas W."/>
            <person name="Sowa M.E."/>
            <person name="Gygi S.P."/>
        </authorList>
    </citation>
    <scope>IDENTIFICATION BY MASS SPECTROMETRY [LARGE SCALE ANALYSIS]</scope>
    <source>
        <tissue>Kidney</tissue>
    </source>
</reference>
<reference key="6">
    <citation type="journal article" date="2011" name="BMC Biol.">
        <title>Evc2 is a positive modulator of Hedgehog signalling that interacts with Evc at the cilia membrane and is also found in the nucleus.</title>
        <authorList>
            <person name="Blair H.J."/>
            <person name="Tompson S."/>
            <person name="Liu Y.N."/>
            <person name="Campbell J."/>
            <person name="MacArthur K."/>
            <person name="Ponting C.P."/>
            <person name="Ruiz-Perez V.L."/>
            <person name="Goodship J.A."/>
        </authorList>
    </citation>
    <scope>SUBCELLULAR LOCATION</scope>
    <scope>TOPOLOGY</scope>
    <scope>INTERACTION WITH EVC2</scope>
</reference>
<reference key="7">
    <citation type="journal article" date="2014" name="Dev. Cell">
        <title>EFCAB7 and IQCE regulate hedgehog signaling by tethering the EVC-EVC2 complex to the base of primary cilia.</title>
        <authorList>
            <person name="Pusapati G.V."/>
            <person name="Hughes C.E."/>
            <person name="Dorn K.V."/>
            <person name="Zhang D."/>
            <person name="Sugianto P."/>
            <person name="Aravind L."/>
            <person name="Rohatgi R."/>
        </authorList>
    </citation>
    <scope>FUNCTION</scope>
    <scope>IDENTIFICATION IN THE EVC COMPLEX</scope>
    <scope>INTERACTION WITH EFCAB7; EVC2 AND IQCE</scope>
    <scope>SUBCELLULAR LOCATION</scope>
    <scope>IDENTIFICATION BY MASS SPECTROMETRY</scope>
</reference>
<evidence type="ECO:0000255" key="1"/>
<evidence type="ECO:0000256" key="2">
    <source>
        <dbReference type="SAM" id="MobiDB-lite"/>
    </source>
</evidence>
<evidence type="ECO:0000269" key="3">
    <source>
    </source>
</evidence>
<evidence type="ECO:0000269" key="4">
    <source>
    </source>
</evidence>
<evidence type="ECO:0000269" key="5">
    <source>
    </source>
</evidence>
<evidence type="ECO:0000305" key="6"/>
<sequence>MTCTKDARLQLGREALQAAPTLLVPAVLLGGVLGLGLGLWLGCRASHLRARLQKDDRKRLLGSSEPPAQSLRDTGSQAKARRRQRETTRDEDAPEVCEPSLSGNITAFALKARVVYPINQKFRPLADGSSHPSLHENLTQAAAILPHLPHQPAEASPASSLGSLSQAGKEDGSSSSSMRSTYSDDRILQCAFLRVGSFPEILACESVDIDLCVCSLHLKDLLQVDTALRQEKHLMFIQILKACLLDFFPKKKPDDELCQKVLSKQEHDLEELEKGLQARLANTEMLGTGDSGYVSLADVERKERELSEQLIDNMGAFWKQMESIQPTLMDQFKCSSSKARQFMMTLTGRMIVAEGLLHDSQDLHVLDTLERTMGRSHLARMVEFLRTQIQEETKCRLAAISRGLELLTVQGQLSGRQKEELLTQQHKAFWEEAERFGREFTQRGKDLVQASQARQAEAAAELTQTQEEERRSFLADSQLTSDPGEFLKAFHEVLERQRLTRSDQEGDEDTRITEAMAALCQELYCSTMGTFQKFVDSLFLKTLPEVTSLPVAECETLRQQVQEQAARQLGQADRFRRRQWGLLCDLLEQDKRVWLEEGTLSTVLQRQLRDHHESTIHGVLSRFSGLSEESSRGILQGHELLLCSALRRLALRGTTITALAQMRLSGKKRLLQELHEQLALEQGVSPCLEEHQWQLLRALEARIQEEAARLEDEAQQTGLRLQQQLLAEAQEAGRLLQLHMERVIGQALLVHARNVASKGRTREKEDFKRTLVETVVESVYVTSTSVNRLVQAHYQAVGKLLQAHEEQLLQRLKTLQGERINAYKLWKKQEFSDPSLESQTADGTHGASQGVQQRMLSQQKRLLDQFTKHQQGRLNSQRQKAQELDQLQAQLETQLQEAEQTLISELSTLARVPLPENKPFSNKRGLPEKPVRTKRKKPPPREREDLGTPNDDHLALADHTTGPLSTTYSASPPIRVHSGGRLDQQDSEAGDGESTSKILQKGSNL</sequence>
<name>EVC_MOUSE</name>
<proteinExistence type="evidence at protein level"/>
<feature type="chain" id="PRO_0000087103" description="EvC complex member EVC">
    <location>
        <begin position="1"/>
        <end position="1005"/>
    </location>
</feature>
<feature type="topological domain" description="Extracellular" evidence="1">
    <location>
        <begin position="1"/>
        <end position="21"/>
    </location>
</feature>
<feature type="transmembrane region" description="Helical" evidence="1">
    <location>
        <begin position="22"/>
        <end position="42"/>
    </location>
</feature>
<feature type="topological domain" description="Cytoplasmic" evidence="1">
    <location>
        <begin position="43"/>
        <end position="1005"/>
    </location>
</feature>
<feature type="region of interest" description="Disordered" evidence="2">
    <location>
        <begin position="58"/>
        <end position="98"/>
    </location>
</feature>
<feature type="region of interest" description="Disordered" evidence="2">
    <location>
        <begin position="150"/>
        <end position="180"/>
    </location>
</feature>
<feature type="region of interest" description="Disordered" evidence="2">
    <location>
        <begin position="834"/>
        <end position="853"/>
    </location>
</feature>
<feature type="region of interest" description="Disordered" evidence="2">
    <location>
        <begin position="914"/>
        <end position="1005"/>
    </location>
</feature>
<feature type="compositionally biased region" description="Polar residues" evidence="2">
    <location>
        <begin position="157"/>
        <end position="166"/>
    </location>
</feature>
<feature type="compositionally biased region" description="Polar residues" evidence="2">
    <location>
        <begin position="835"/>
        <end position="853"/>
    </location>
</feature>
<feature type="compositionally biased region" description="Basic and acidic residues" evidence="2">
    <location>
        <begin position="939"/>
        <end position="956"/>
    </location>
</feature>
<feature type="compositionally biased region" description="Polar residues" evidence="2">
    <location>
        <begin position="993"/>
        <end position="1005"/>
    </location>
</feature>
<feature type="splice variant" id="VSP_004247" description="In isoform Short." evidence="6">
    <location>
        <begin position="966"/>
        <end position="978"/>
    </location>
</feature>
<feature type="sequence conflict" description="In Ref. 1; CAB76567." evidence="6" ref="1">
    <original>S</original>
    <variation>A</variation>
    <location>
        <position position="376"/>
    </location>
</feature>
<feature type="sequence conflict" description="In Ref. 1; CAB76567." evidence="6" ref="1">
    <original>T</original>
    <variation>M</variation>
    <location>
        <position position="441"/>
    </location>
</feature>
<feature type="sequence conflict" description="In Ref. 1; CAB76567." evidence="6" ref="1">
    <original>F</original>
    <variation>L</variation>
    <location>
        <position position="473"/>
    </location>
</feature>
<feature type="sequence conflict" description="In Ref. 1; CAB76567." evidence="6" ref="1">
    <original>L</original>
    <variation>F</variation>
    <location>
        <position position="902"/>
    </location>
</feature>
<feature type="sequence conflict" description="In Ref. 1; CAB76567." evidence="6" ref="1">
    <original>K</original>
    <variation>N</variation>
    <location>
        <position position="923"/>
    </location>
</feature>
<accession>P57680</accession>
<accession>E9QPK2</accession>
<dbReference type="EMBL" id="AJ250841">
    <property type="protein sequence ID" value="CAB76567.1"/>
    <property type="molecule type" value="mRNA"/>
</dbReference>
<dbReference type="EMBL" id="AJ250841">
    <property type="protein sequence ID" value="CAB76568.1"/>
    <property type="status" value="ALT_SEQ"/>
    <property type="molecule type" value="mRNA"/>
</dbReference>
<dbReference type="EMBL" id="AC111129">
    <property type="status" value="NOT_ANNOTATED_CDS"/>
    <property type="molecule type" value="Genomic_DNA"/>
</dbReference>
<dbReference type="CCDS" id="CCDS19247.1">
    <molecule id="P57680-1"/>
</dbReference>
<dbReference type="RefSeq" id="NP_001412579.1">
    <molecule id="P57680-2"/>
    <property type="nucleotide sequence ID" value="NM_001425650.1"/>
</dbReference>
<dbReference type="RefSeq" id="NP_067267.2">
    <molecule id="P57680-1"/>
    <property type="nucleotide sequence ID" value="NM_021292.3"/>
</dbReference>
<dbReference type="RefSeq" id="XP_006504105.1">
    <property type="nucleotide sequence ID" value="XM_006504042.3"/>
</dbReference>
<dbReference type="SMR" id="P57680"/>
<dbReference type="CORUM" id="P57680"/>
<dbReference type="FunCoup" id="P57680">
    <property type="interactions" value="122"/>
</dbReference>
<dbReference type="STRING" id="10090.ENSMUSP00000031005"/>
<dbReference type="GlyGen" id="P57680">
    <property type="glycosylation" value="1 site, 1 O-linked glycan (1 site)"/>
</dbReference>
<dbReference type="iPTMnet" id="P57680"/>
<dbReference type="PhosphoSitePlus" id="P57680"/>
<dbReference type="PaxDb" id="10090-ENSMUSP00000031005"/>
<dbReference type="ProteomicsDB" id="275900">
    <molecule id="P57680-1"/>
</dbReference>
<dbReference type="ProteomicsDB" id="275901">
    <molecule id="P57680-2"/>
</dbReference>
<dbReference type="Pumba" id="P57680"/>
<dbReference type="Antibodypedia" id="2233">
    <property type="antibodies" value="85 antibodies from 14 providers"/>
</dbReference>
<dbReference type="DNASU" id="59056"/>
<dbReference type="Ensembl" id="ENSMUST00000031005.11">
    <molecule id="P57680-1"/>
    <property type="protein sequence ID" value="ENSMUSP00000031005.5"/>
    <property type="gene ID" value="ENSMUSG00000029122.12"/>
</dbReference>
<dbReference type="GeneID" id="59056"/>
<dbReference type="KEGG" id="mmu:59056"/>
<dbReference type="UCSC" id="uc008xfo.2">
    <molecule id="P57680-1"/>
    <property type="organism name" value="mouse"/>
</dbReference>
<dbReference type="AGR" id="MGI:1890596"/>
<dbReference type="CTD" id="2121"/>
<dbReference type="MGI" id="MGI:1890596">
    <property type="gene designation" value="Evc"/>
</dbReference>
<dbReference type="VEuPathDB" id="HostDB:ENSMUSG00000029122"/>
<dbReference type="eggNOG" id="ENOG502QUDD">
    <property type="taxonomic scope" value="Eukaryota"/>
</dbReference>
<dbReference type="GeneTree" id="ENSGT00940000154127"/>
<dbReference type="HOGENOM" id="CLU_014037_0_0_1"/>
<dbReference type="InParanoid" id="P57680"/>
<dbReference type="OMA" id="KDGQVWS"/>
<dbReference type="OrthoDB" id="8910527at2759"/>
<dbReference type="TreeFam" id="TF335835"/>
<dbReference type="Reactome" id="R-MMU-5632684">
    <property type="pathway name" value="Hedgehog 'on' state"/>
</dbReference>
<dbReference type="BioGRID-ORCS" id="59056">
    <property type="hits" value="4 hits in 76 CRISPR screens"/>
</dbReference>
<dbReference type="ChiTaRS" id="Evc">
    <property type="organism name" value="mouse"/>
</dbReference>
<dbReference type="PRO" id="PR:P57680"/>
<dbReference type="Proteomes" id="UP000000589">
    <property type="component" value="Chromosome 5"/>
</dbReference>
<dbReference type="RNAct" id="P57680">
    <property type="molecule type" value="protein"/>
</dbReference>
<dbReference type="Bgee" id="ENSMUSG00000029122">
    <property type="expression patterns" value="Expressed in right kidney and 197 other cell types or tissues"/>
</dbReference>
<dbReference type="ExpressionAtlas" id="P57680">
    <property type="expression patterns" value="baseline and differential"/>
</dbReference>
<dbReference type="GO" id="GO:0036064">
    <property type="term" value="C:ciliary basal body"/>
    <property type="evidence" value="ECO:0000314"/>
    <property type="project" value="UniProtKB"/>
</dbReference>
<dbReference type="GO" id="GO:0060170">
    <property type="term" value="C:ciliary membrane"/>
    <property type="evidence" value="ECO:0000314"/>
    <property type="project" value="UniProtKB"/>
</dbReference>
<dbReference type="GO" id="GO:0005929">
    <property type="term" value="C:cilium"/>
    <property type="evidence" value="ECO:0000314"/>
    <property type="project" value="UniProtKB"/>
</dbReference>
<dbReference type="GO" id="GO:0005737">
    <property type="term" value="C:cytoplasm"/>
    <property type="evidence" value="ECO:0007669"/>
    <property type="project" value="UniProtKB-KW"/>
</dbReference>
<dbReference type="GO" id="GO:0098797">
    <property type="term" value="C:plasma membrane protein complex"/>
    <property type="evidence" value="ECO:0000314"/>
    <property type="project" value="UniProtKB"/>
</dbReference>
<dbReference type="GO" id="GO:0051216">
    <property type="term" value="P:cartilage development"/>
    <property type="evidence" value="ECO:0007669"/>
    <property type="project" value="Ensembl"/>
</dbReference>
<dbReference type="GO" id="GO:0003416">
    <property type="term" value="P:endochondral bone growth"/>
    <property type="evidence" value="ECO:0000315"/>
    <property type="project" value="UniProtKB"/>
</dbReference>
<dbReference type="GO" id="GO:0045880">
    <property type="term" value="P:positive regulation of smoothened signaling pathway"/>
    <property type="evidence" value="ECO:0000315"/>
    <property type="project" value="UniProtKB"/>
</dbReference>
<dbReference type="GO" id="GO:0007224">
    <property type="term" value="P:smoothened signaling pathway"/>
    <property type="evidence" value="ECO:0007669"/>
    <property type="project" value="InterPro"/>
</dbReference>
<dbReference type="InterPro" id="IPR026501">
    <property type="entry name" value="Limbin/EVC"/>
</dbReference>
<dbReference type="PANTHER" id="PTHR16795:SF13">
    <property type="entry name" value="EVC COMPLEX MEMBER EVC"/>
    <property type="match status" value="1"/>
</dbReference>
<dbReference type="PANTHER" id="PTHR16795">
    <property type="entry name" value="LIMBIN/ELLIS-VAN CREVELD PROTEIN"/>
    <property type="match status" value="1"/>
</dbReference>
<keyword id="KW-0025">Alternative splicing</keyword>
<keyword id="KW-1003">Cell membrane</keyword>
<keyword id="KW-0966">Cell projection</keyword>
<keyword id="KW-0969">Cilium</keyword>
<keyword id="KW-0963">Cytoplasm</keyword>
<keyword id="KW-0206">Cytoskeleton</keyword>
<keyword id="KW-0472">Membrane</keyword>
<keyword id="KW-1185">Reference proteome</keyword>
<keyword id="KW-0812">Transmembrane</keyword>
<keyword id="KW-1133">Transmembrane helix</keyword>
<gene>
    <name type="primary">Evc</name>
</gene>
<protein>
    <recommendedName>
        <fullName evidence="6">EvC complex member EVC</fullName>
    </recommendedName>
    <alternativeName>
        <fullName>Ellis-van Creveld syndrome protein homolog</fullName>
    </alternativeName>
</protein>
<comment type="function">
    <text evidence="3 5">Component of the EvC complex that positively regulates ciliary Hedgehog (Hh) signaling (PubMed:17660199, PubMed:24582806). Involved in endochondral growth and skeletal development (PubMed:17660199).</text>
</comment>
<comment type="subunit">
    <text evidence="5">Component of the EvC complex composed of EFCAB7, IQCE, EVC2 and EVC; built from two subcomplexes, EVC2:EVC and EFCAB7:IQCE (PubMed:24582806). Interacts with EVC2 (PubMed:21356043, PubMed:24582806). Interacts with EFCAB7 (PubMed:24582806). Interacts with IQCE (PubMed:24582806).</text>
</comment>
<comment type="subcellular location">
    <subcellularLocation>
        <location evidence="4">Cell membrane</location>
        <topology evidence="4">Single-pass membrane protein</topology>
    </subcellularLocation>
    <subcellularLocation>
        <location evidence="3">Cytoplasm</location>
        <location evidence="3">Cytoskeleton</location>
        <location evidence="3">Cilium basal body</location>
    </subcellularLocation>
    <subcellularLocation>
        <location evidence="4">Cell projection</location>
        <location evidence="4">Cilium</location>
    </subcellularLocation>
    <subcellularLocation>
        <location evidence="4 5">Cell projection</location>
        <location evidence="4 5">Cilium membrane</location>
    </subcellularLocation>
    <text evidence="4 5">EVC2 is required for the localization of EVC at the base of primary cilia (PubMed:21356043). The EvC complex localizes at the base of cilia in the EvC zone of primary cilia in a EFCAB7-dependent manner (PubMed:24582806).</text>
</comment>
<comment type="alternative products">
    <event type="alternative splicing"/>
    <isoform>
        <id>P57680-1</id>
        <name>Long</name>
        <sequence type="displayed"/>
    </isoform>
    <isoform>
        <id>P57680-2</id>
        <name>Short</name>
        <sequence type="described" ref="VSP_004247"/>
    </isoform>
</comment>
<comment type="tissue specificity">
    <text evidence="3">Expressed in the developing skeleton and the orofacial region. Expression is general to all the cartilaginous components of the skeleton, including the chondrocranium, the vertebrae, the rib cage, and the axial skeleton by 15.5 dpc.</text>
</comment>